<proteinExistence type="evidence at transcript level"/>
<sequence length="631" mass="67616">MSKIIGIDLGTTNSCVAIMDGKTPKVIENAEGARTTPSVVAFLEDGERLIGQPAKRQAVTNPTNTLFAIKRLIGRTASDPVVEKDKGMVPYEIVKGPTGDAWVKAHGKDYSPQEVSAFILQKMKEAAEAHLGEPVTKAVITVPAYFNDAQRQATKDAGKIAGLEVLRIINEPTAAALAYGLDKNDGKKIAVYDLGGGTFDVSILEIGDGVFEVKSTNGDTFLGGEDFDLRIVDYLADEFKKEQGVDLRKDKLALQRLREEAEKAKKELSSTAQYEVNLPFISMNASGPLHLNIKLSRAKLEALVDDLIARTIGPCEQALKDAGLKKSDIDEVILVGGMSRMPKVQQAVQDFFGREPHKGVNPDEVVALGAAVQAGVLQGDVKDVLLLDVTPLTLGIETLGGVFTPLIERNTTIPTKRSQTFSTADDNQSAVTIRVFQGERPMAQDNKMLGQFDLVGIPPAPRGVPQIEVTFDIDANGIVQVHAKDKATNKEQSIRIQANGGLSDSDIERMVKEAEANKAADEKKKQLVEAKNQGEAILHSTEKALAEHGDKVGAAEKTAIETGITELKTALEGEDVEAIQAKTQALIQASMKLGEAMYAAQQGSAEGGDAKADDGVVDAEFEEVDDNKPAA</sequence>
<feature type="chain" id="PRO_0000078440" description="Chaperone protein DnaK">
    <location>
        <begin position="1"/>
        <end position="631"/>
    </location>
</feature>
<feature type="modified residue" description="Phosphothreonine; by autocatalysis" evidence="1">
    <location>
        <position position="198"/>
    </location>
</feature>
<feature type="sequence conflict" description="In Ref. 1; AAA62723." evidence="2" ref="1">
    <original>EIVKGPT</original>
    <variation>RSSRARA</variation>
    <location>
        <begin position="92"/>
        <end position="98"/>
    </location>
</feature>
<feature type="sequence conflict" description="In Ref. 1; AAA62723." evidence="2" ref="1">
    <location>
        <position position="260"/>
    </location>
</feature>
<feature type="sequence conflict" description="In Ref. 1; AAA62723." evidence="2" ref="1">
    <original>E</original>
    <variation>D</variation>
    <location>
        <position position="397"/>
    </location>
</feature>
<feature type="sequence conflict" description="In Ref. 1; AAA62723." evidence="2" ref="1">
    <original>P</original>
    <variation>A</variation>
    <location>
        <position position="441"/>
    </location>
</feature>
<feature type="sequence conflict" description="In Ref. 1; AAA62723." evidence="2" ref="1">
    <original>L</original>
    <variation>Q</variation>
    <location>
        <position position="449"/>
    </location>
</feature>
<feature type="sequence conflict" description="In Ref. 2; AAK21998." evidence="2" ref="2">
    <original>Q</original>
    <variation>H</variation>
    <location>
        <position position="492"/>
    </location>
</feature>
<name>DNAK_CAUVC</name>
<dbReference type="EMBL" id="M55224">
    <property type="protein sequence ID" value="AAA62723.1"/>
    <property type="molecule type" value="Genomic_DNA"/>
</dbReference>
<dbReference type="EMBL" id="AE005673">
    <property type="protein sequence ID" value="AAK21998.1"/>
    <property type="molecule type" value="Genomic_DNA"/>
</dbReference>
<dbReference type="PIR" id="A35388">
    <property type="entry name" value="A35388"/>
</dbReference>
<dbReference type="PIR" id="B87250">
    <property type="entry name" value="B87250"/>
</dbReference>
<dbReference type="RefSeq" id="NP_418830.1">
    <property type="nucleotide sequence ID" value="NC_002696.2"/>
</dbReference>
<dbReference type="SMR" id="P20442"/>
<dbReference type="STRING" id="190650.CC_0010"/>
<dbReference type="EnsemblBacteria" id="AAK21998">
    <property type="protein sequence ID" value="AAK21998"/>
    <property type="gene ID" value="CC_0010"/>
</dbReference>
<dbReference type="KEGG" id="ccr:CC_0010"/>
<dbReference type="PATRIC" id="fig|190650.5.peg.11"/>
<dbReference type="eggNOG" id="COG0443">
    <property type="taxonomic scope" value="Bacteria"/>
</dbReference>
<dbReference type="HOGENOM" id="CLU_005965_2_3_5"/>
<dbReference type="BioCyc" id="CAULO:CC0010-MONOMER"/>
<dbReference type="Proteomes" id="UP000001816">
    <property type="component" value="Chromosome"/>
</dbReference>
<dbReference type="GO" id="GO:0005524">
    <property type="term" value="F:ATP binding"/>
    <property type="evidence" value="ECO:0007669"/>
    <property type="project" value="UniProtKB-UniRule"/>
</dbReference>
<dbReference type="GO" id="GO:0140662">
    <property type="term" value="F:ATP-dependent protein folding chaperone"/>
    <property type="evidence" value="ECO:0007669"/>
    <property type="project" value="InterPro"/>
</dbReference>
<dbReference type="GO" id="GO:0051082">
    <property type="term" value="F:unfolded protein binding"/>
    <property type="evidence" value="ECO:0007669"/>
    <property type="project" value="InterPro"/>
</dbReference>
<dbReference type="CDD" id="cd10234">
    <property type="entry name" value="ASKHA_NBD_HSP70_DnaK-like"/>
    <property type="match status" value="1"/>
</dbReference>
<dbReference type="FunFam" id="2.60.34.10:FF:000014">
    <property type="entry name" value="Chaperone protein DnaK HSP70"/>
    <property type="match status" value="1"/>
</dbReference>
<dbReference type="FunFam" id="3.30.420.40:FF:000020">
    <property type="entry name" value="Chaperone protein HscA homolog"/>
    <property type="match status" value="1"/>
</dbReference>
<dbReference type="FunFam" id="3.30.30.30:FF:000003">
    <property type="entry name" value="Heat shock protein 9"/>
    <property type="match status" value="1"/>
</dbReference>
<dbReference type="FunFam" id="1.20.1270.10:FF:000001">
    <property type="entry name" value="Molecular chaperone DnaK"/>
    <property type="match status" value="1"/>
</dbReference>
<dbReference type="FunFam" id="3.30.420.40:FF:000004">
    <property type="entry name" value="Molecular chaperone DnaK"/>
    <property type="match status" value="1"/>
</dbReference>
<dbReference type="FunFam" id="3.90.640.10:FF:000003">
    <property type="entry name" value="Molecular chaperone DnaK"/>
    <property type="match status" value="1"/>
</dbReference>
<dbReference type="Gene3D" id="1.20.1270.10">
    <property type="match status" value="1"/>
</dbReference>
<dbReference type="Gene3D" id="3.30.420.40">
    <property type="match status" value="2"/>
</dbReference>
<dbReference type="Gene3D" id="3.90.640.10">
    <property type="entry name" value="Actin, Chain A, domain 4"/>
    <property type="match status" value="1"/>
</dbReference>
<dbReference type="Gene3D" id="2.60.34.10">
    <property type="entry name" value="Substrate Binding Domain Of DNAk, Chain A, domain 1"/>
    <property type="match status" value="1"/>
</dbReference>
<dbReference type="HAMAP" id="MF_00332">
    <property type="entry name" value="DnaK"/>
    <property type="match status" value="1"/>
</dbReference>
<dbReference type="InterPro" id="IPR043129">
    <property type="entry name" value="ATPase_NBD"/>
</dbReference>
<dbReference type="InterPro" id="IPR012725">
    <property type="entry name" value="Chaperone_DnaK"/>
</dbReference>
<dbReference type="InterPro" id="IPR018181">
    <property type="entry name" value="Heat_shock_70_CS"/>
</dbReference>
<dbReference type="InterPro" id="IPR029048">
    <property type="entry name" value="HSP70_C_sf"/>
</dbReference>
<dbReference type="InterPro" id="IPR029047">
    <property type="entry name" value="HSP70_peptide-bd_sf"/>
</dbReference>
<dbReference type="InterPro" id="IPR013126">
    <property type="entry name" value="Hsp_70_fam"/>
</dbReference>
<dbReference type="NCBIfam" id="NF001413">
    <property type="entry name" value="PRK00290.1"/>
    <property type="match status" value="1"/>
</dbReference>
<dbReference type="NCBIfam" id="NF003520">
    <property type="entry name" value="PRK05183.1"/>
    <property type="match status" value="1"/>
</dbReference>
<dbReference type="NCBIfam" id="TIGR02350">
    <property type="entry name" value="prok_dnaK"/>
    <property type="match status" value="1"/>
</dbReference>
<dbReference type="PANTHER" id="PTHR19375">
    <property type="entry name" value="HEAT SHOCK PROTEIN 70KDA"/>
    <property type="match status" value="1"/>
</dbReference>
<dbReference type="Pfam" id="PF00012">
    <property type="entry name" value="HSP70"/>
    <property type="match status" value="1"/>
</dbReference>
<dbReference type="PRINTS" id="PR00301">
    <property type="entry name" value="HEATSHOCK70"/>
</dbReference>
<dbReference type="SUPFAM" id="SSF53067">
    <property type="entry name" value="Actin-like ATPase domain"/>
    <property type="match status" value="2"/>
</dbReference>
<dbReference type="SUPFAM" id="SSF100934">
    <property type="entry name" value="Heat shock protein 70kD (HSP70), C-terminal subdomain"/>
    <property type="match status" value="1"/>
</dbReference>
<dbReference type="SUPFAM" id="SSF100920">
    <property type="entry name" value="Heat shock protein 70kD (HSP70), peptide-binding domain"/>
    <property type="match status" value="1"/>
</dbReference>
<dbReference type="PROSITE" id="PS00297">
    <property type="entry name" value="HSP70_1"/>
    <property type="match status" value="1"/>
</dbReference>
<dbReference type="PROSITE" id="PS00329">
    <property type="entry name" value="HSP70_2"/>
    <property type="match status" value="1"/>
</dbReference>
<dbReference type="PROSITE" id="PS01036">
    <property type="entry name" value="HSP70_3"/>
    <property type="match status" value="1"/>
</dbReference>
<gene>
    <name type="primary">dnaK</name>
    <name type="ordered locus">CC_0010</name>
</gene>
<reference key="1">
    <citation type="journal article" date="1990" name="J. Bacteriol.">
        <title>Expression of the Caulobacter heat shock gene dnaK is developmentally controlled during growth at normal temperatures.</title>
        <authorList>
            <person name="Gomes S.L."/>
            <person name="Gober J.W."/>
            <person name="Shapiro L."/>
        </authorList>
    </citation>
    <scope>NUCLEOTIDE SEQUENCE [GENOMIC DNA]</scope>
</reference>
<reference key="2">
    <citation type="journal article" date="2001" name="Proc. Natl. Acad. Sci. U.S.A.">
        <title>Complete genome sequence of Caulobacter crescentus.</title>
        <authorList>
            <person name="Nierman W.C."/>
            <person name="Feldblyum T.V."/>
            <person name="Laub M.T."/>
            <person name="Paulsen I.T."/>
            <person name="Nelson K.E."/>
            <person name="Eisen J.A."/>
            <person name="Heidelberg J.F."/>
            <person name="Alley M.R.K."/>
            <person name="Ohta N."/>
            <person name="Maddock J.R."/>
            <person name="Potocka I."/>
            <person name="Nelson W.C."/>
            <person name="Newton A."/>
            <person name="Stephens C."/>
            <person name="Phadke N.D."/>
            <person name="Ely B."/>
            <person name="DeBoy R.T."/>
            <person name="Dodson R.J."/>
            <person name="Durkin A.S."/>
            <person name="Gwinn M.L."/>
            <person name="Haft D.H."/>
            <person name="Kolonay J.F."/>
            <person name="Smit J."/>
            <person name="Craven M.B."/>
            <person name="Khouri H.M."/>
            <person name="Shetty J."/>
            <person name="Berry K.J."/>
            <person name="Utterback T.R."/>
            <person name="Tran K."/>
            <person name="Wolf A.M."/>
            <person name="Vamathevan J.J."/>
            <person name="Ermolaeva M.D."/>
            <person name="White O."/>
            <person name="Salzberg S.L."/>
            <person name="Venter J.C."/>
            <person name="Shapiro L."/>
            <person name="Fraser C.M."/>
        </authorList>
    </citation>
    <scope>NUCLEOTIDE SEQUENCE [LARGE SCALE GENOMIC DNA]</scope>
    <source>
        <strain>ATCC 19089 / CIP 103742 / CB 15</strain>
    </source>
</reference>
<protein>
    <recommendedName>
        <fullName>Chaperone protein DnaK</fullName>
    </recommendedName>
    <alternativeName>
        <fullName>HSP70</fullName>
    </alternativeName>
    <alternativeName>
        <fullName>Heat shock 70 kDa protein</fullName>
    </alternativeName>
    <alternativeName>
        <fullName>Heat shock protein 70</fullName>
    </alternativeName>
</protein>
<accession>P20442</accession>
<comment type="function">
    <text evidence="1">Acts as a chaperone.</text>
</comment>
<comment type="induction">
    <text>By heat shock.</text>
</comment>
<comment type="similarity">
    <text evidence="2">Belongs to the heat shock protein 70 family.</text>
</comment>
<evidence type="ECO:0000250" key="1"/>
<evidence type="ECO:0000305" key="2"/>
<organism>
    <name type="scientific">Caulobacter vibrioides (strain ATCC 19089 / CIP 103742 / CB 15)</name>
    <name type="common">Caulobacter crescentus</name>
    <dbReference type="NCBI Taxonomy" id="190650"/>
    <lineage>
        <taxon>Bacteria</taxon>
        <taxon>Pseudomonadati</taxon>
        <taxon>Pseudomonadota</taxon>
        <taxon>Alphaproteobacteria</taxon>
        <taxon>Caulobacterales</taxon>
        <taxon>Caulobacteraceae</taxon>
        <taxon>Caulobacter</taxon>
    </lineage>
</organism>
<keyword id="KW-0067">ATP-binding</keyword>
<keyword id="KW-0143">Chaperone</keyword>
<keyword id="KW-0547">Nucleotide-binding</keyword>
<keyword id="KW-0597">Phosphoprotein</keyword>
<keyword id="KW-1185">Reference proteome</keyword>
<keyword id="KW-0346">Stress response</keyword>